<protein>
    <recommendedName>
        <fullName>Serine/arginine-rich splicing factor 2</fullName>
    </recommendedName>
    <alternativeName>
        <fullName>Splicing component, 35 kDa</fullName>
    </alternativeName>
    <alternativeName>
        <fullName>Splicing factor SC35</fullName>
        <shortName>SC-35</shortName>
    </alternativeName>
    <alternativeName>
        <fullName>Splicing factor, arginine/serine-rich 2</fullName>
    </alternativeName>
</protein>
<organism>
    <name type="scientific">Pan troglodytes</name>
    <name type="common">Chimpanzee</name>
    <dbReference type="NCBI Taxonomy" id="9598"/>
    <lineage>
        <taxon>Eukaryota</taxon>
        <taxon>Metazoa</taxon>
        <taxon>Chordata</taxon>
        <taxon>Craniata</taxon>
        <taxon>Vertebrata</taxon>
        <taxon>Euteleostomi</taxon>
        <taxon>Mammalia</taxon>
        <taxon>Eutheria</taxon>
        <taxon>Euarchontoglires</taxon>
        <taxon>Primates</taxon>
        <taxon>Haplorrhini</taxon>
        <taxon>Catarrhini</taxon>
        <taxon>Hominidae</taxon>
        <taxon>Pan</taxon>
    </lineage>
</organism>
<gene>
    <name type="primary">SRSF2</name>
    <name type="synonym">SFRS2</name>
</gene>
<proteinExistence type="evidence at transcript level"/>
<evidence type="ECO:0000250" key="1"/>
<evidence type="ECO:0000250" key="2">
    <source>
        <dbReference type="UniProtKB" id="Q01130"/>
    </source>
</evidence>
<evidence type="ECO:0000255" key="3">
    <source>
        <dbReference type="PROSITE-ProRule" id="PRU00176"/>
    </source>
</evidence>
<evidence type="ECO:0000256" key="4">
    <source>
        <dbReference type="SAM" id="MobiDB-lite"/>
    </source>
</evidence>
<evidence type="ECO:0000305" key="5"/>
<dbReference type="EMBL" id="AB188282">
    <property type="protein sequence ID" value="BAD74033.1"/>
    <property type="molecule type" value="mRNA"/>
</dbReference>
<dbReference type="RefSeq" id="NP_001029290.1">
    <property type="nucleotide sequence ID" value="NM_001034118.1"/>
</dbReference>
<dbReference type="BMRB" id="Q5R1W5"/>
<dbReference type="SMR" id="Q5R1W5"/>
<dbReference type="STRING" id="9598.ENSPTRP00000043428"/>
<dbReference type="PaxDb" id="9598-ENSPTRP00000043428"/>
<dbReference type="GeneID" id="619467"/>
<dbReference type="KEGG" id="ptr:619467"/>
<dbReference type="CTD" id="6427"/>
<dbReference type="eggNOG" id="KOG4207">
    <property type="taxonomic scope" value="Eukaryota"/>
</dbReference>
<dbReference type="InParanoid" id="Q5R1W5"/>
<dbReference type="OrthoDB" id="17681at9604"/>
<dbReference type="Proteomes" id="UP000002277">
    <property type="component" value="Unplaced"/>
</dbReference>
<dbReference type="GO" id="GO:0016607">
    <property type="term" value="C:nuclear speck"/>
    <property type="evidence" value="ECO:0007669"/>
    <property type="project" value="UniProtKB-SubCell"/>
</dbReference>
<dbReference type="GO" id="GO:0003723">
    <property type="term" value="F:RNA binding"/>
    <property type="evidence" value="ECO:0007669"/>
    <property type="project" value="UniProtKB-KW"/>
</dbReference>
<dbReference type="GO" id="GO:0006397">
    <property type="term" value="P:mRNA processing"/>
    <property type="evidence" value="ECO:0007669"/>
    <property type="project" value="UniProtKB-KW"/>
</dbReference>
<dbReference type="GO" id="GO:0008380">
    <property type="term" value="P:RNA splicing"/>
    <property type="evidence" value="ECO:0007669"/>
    <property type="project" value="UniProtKB-KW"/>
</dbReference>
<dbReference type="CDD" id="cd12311">
    <property type="entry name" value="RRM_SRSF2_SRSF8"/>
    <property type="match status" value="1"/>
</dbReference>
<dbReference type="FunFam" id="3.30.70.330:FF:000504">
    <property type="entry name" value="Serine/arginine-rich splicing factor 2"/>
    <property type="match status" value="1"/>
</dbReference>
<dbReference type="Gene3D" id="3.30.70.330">
    <property type="match status" value="1"/>
</dbReference>
<dbReference type="InterPro" id="IPR012677">
    <property type="entry name" value="Nucleotide-bd_a/b_plait_sf"/>
</dbReference>
<dbReference type="InterPro" id="IPR035979">
    <property type="entry name" value="RBD_domain_sf"/>
</dbReference>
<dbReference type="InterPro" id="IPR051106">
    <property type="entry name" value="RNA-bind/splicing_reg"/>
</dbReference>
<dbReference type="InterPro" id="IPR000504">
    <property type="entry name" value="RRM_dom"/>
</dbReference>
<dbReference type="InterPro" id="IPR003954">
    <property type="entry name" value="RRM_dom_euk"/>
</dbReference>
<dbReference type="PANTHER" id="PTHR48028">
    <property type="entry name" value="GLYCINE-RICH RNA-BINDING PROTEIN RZ1A"/>
    <property type="match status" value="1"/>
</dbReference>
<dbReference type="PANTHER" id="PTHR48028:SF4">
    <property type="entry name" value="SC35-LIKE SPLICING FACTOR"/>
    <property type="match status" value="1"/>
</dbReference>
<dbReference type="Pfam" id="PF00076">
    <property type="entry name" value="RRM_1"/>
    <property type="match status" value="1"/>
</dbReference>
<dbReference type="SMART" id="SM00360">
    <property type="entry name" value="RRM"/>
    <property type="match status" value="1"/>
</dbReference>
<dbReference type="SMART" id="SM00361">
    <property type="entry name" value="RRM_1"/>
    <property type="match status" value="1"/>
</dbReference>
<dbReference type="SUPFAM" id="SSF54928">
    <property type="entry name" value="RNA-binding domain, RBD"/>
    <property type="match status" value="1"/>
</dbReference>
<dbReference type="PROSITE" id="PS50102">
    <property type="entry name" value="RRM"/>
    <property type="match status" value="1"/>
</dbReference>
<reference key="1">
    <citation type="submission" date="2004-08" db="EMBL/GenBank/DDBJ databases">
        <authorList>
            <person name="Hirai M."/>
            <person name="Sakate R."/>
            <person name="Hida M."/>
            <person name="Sugano S."/>
            <person name="Hayasaka I."/>
            <person name="Suto Y."/>
            <person name="Osada N."/>
            <person name="Hashimoto K."/>
        </authorList>
    </citation>
    <scope>NUCLEOTIDE SEQUENCE [MRNA]</scope>
    <source>
        <tissue>Skin</tissue>
    </source>
</reference>
<sequence>MSYGRPPPDVEGMTSLKVDNLTYRTSPDTLRRVFEKYGRVGDVYIPRDRYTKESRGFAFVRFHDKRDAEDAMDAMDGAVLDGRELRVQMARYGRPPDSHHSRRGPPPRRYGGGGYGRRSRSPRRRRRSRSRSRSRSRSRSRSRYSRSKSRSRTRSRSRSTSKSRSARRSKSKSSSVSRSRSRSRSRSRSRSPPPVSKREPKSRSRSKSPPESPEEEGAVSS</sequence>
<accession>Q5R1W5</accession>
<keyword id="KW-0007">Acetylation</keyword>
<keyword id="KW-0507">mRNA processing</keyword>
<keyword id="KW-0508">mRNA splicing</keyword>
<keyword id="KW-0539">Nucleus</keyword>
<keyword id="KW-0597">Phosphoprotein</keyword>
<keyword id="KW-1185">Reference proteome</keyword>
<keyword id="KW-0694">RNA-binding</keyword>
<feature type="initiator methionine" description="Removed" evidence="2">
    <location>
        <position position="1"/>
    </location>
</feature>
<feature type="chain" id="PRO_0000081920" description="Serine/arginine-rich splicing factor 2">
    <location>
        <begin position="2"/>
        <end position="221"/>
    </location>
</feature>
<feature type="domain" description="RRM" evidence="3">
    <location>
        <begin position="14"/>
        <end position="92"/>
    </location>
</feature>
<feature type="region of interest" description="Disordered" evidence="4">
    <location>
        <begin position="92"/>
        <end position="221"/>
    </location>
</feature>
<feature type="compositionally biased region" description="Basic residues" evidence="4">
    <location>
        <begin position="117"/>
        <end position="171"/>
    </location>
</feature>
<feature type="compositionally biased region" description="Basic residues" evidence="4">
    <location>
        <begin position="179"/>
        <end position="189"/>
    </location>
</feature>
<feature type="compositionally biased region" description="Acidic residues" evidence="4">
    <location>
        <begin position="212"/>
        <end position="221"/>
    </location>
</feature>
<feature type="modified residue" description="N-acetylserine" evidence="2">
    <location>
        <position position="2"/>
    </location>
</feature>
<feature type="modified residue" description="Phosphoserine" evidence="2">
    <location>
        <position position="2"/>
    </location>
</feature>
<feature type="modified residue" description="Phosphothreonine" evidence="2">
    <location>
        <position position="22"/>
    </location>
</feature>
<feature type="modified residue" description="Phosphothreonine" evidence="2">
    <location>
        <position position="25"/>
    </location>
</feature>
<feature type="modified residue" description="Phosphoserine" evidence="2">
    <location>
        <position position="26"/>
    </location>
</feature>
<feature type="modified residue" description="N6-acetyllysine" evidence="2">
    <location>
        <position position="52"/>
    </location>
</feature>
<feature type="modified residue" description="Phosphoserine" evidence="2">
    <location>
        <position position="189"/>
    </location>
</feature>
<feature type="modified residue" description="Phosphoserine" evidence="2">
    <location>
        <position position="191"/>
    </location>
</feature>
<feature type="modified residue" description="Phosphoserine" evidence="2">
    <location>
        <position position="204"/>
    </location>
</feature>
<feature type="modified residue" description="Phosphoserine" evidence="2">
    <location>
        <position position="206"/>
    </location>
</feature>
<feature type="modified residue" description="Phosphoserine" evidence="2">
    <location>
        <position position="208"/>
    </location>
</feature>
<feature type="modified residue" description="Phosphoserine" evidence="2">
    <location>
        <position position="212"/>
    </location>
</feature>
<feature type="modified residue" description="Phosphoserine" evidence="2">
    <location>
        <position position="220"/>
    </location>
</feature>
<name>SRSF2_PANTR</name>
<comment type="function">
    <text evidence="1">Necessary for the splicing of pre-mRNA. It is required for formation of the earliest ATP-dependent splicing complex and interacts with spliceosomal components bound to both the 5'- and 3'-splice sites during spliceosome assembly. It also is required for ATP-dependent interactions of both U1 and U2 snRNPs with pre-mRNA. Interacts with other spliceosomal components, via the RS domains, to form a bridge between the 5'- and 3'-splice site binding components, U1 snRNP and U2AF. Binds to purine-rich RNA sequences, either 5'-AGSAGAGTA-3' (S=C or G) or 5'-GTTCGAGTA-3'. Can bind to beta-globin mRNA and commit it to the splicing pathway. The phosphorylated form (by SRPK2) is required for cellular apoptosis in response to cisplatin treatment (By similarity).</text>
</comment>
<comment type="subunit">
    <text evidence="1">In vitro, self-associates and binds SRSF1/SFRS1 (ASF/SF2), SNRP70 and U2AF1 but not U2AF2. Binds SREK1/SFRS12. Interacts with CCNL1 and CCNL2. Interacts with SCAF11. Interacts with ZRSR2/U2AF1-RS2. Interacts with CCDC55 (via C-terminus). Interacts with BRDT (By similarity).</text>
</comment>
<comment type="subcellular location">
    <subcellularLocation>
        <location evidence="1">Nucleus</location>
    </subcellularLocation>
    <subcellularLocation>
        <location evidence="1">Nucleus</location>
        <location evidence="1">Nucleoplasm</location>
    </subcellularLocation>
    <subcellularLocation>
        <location evidence="1">Nucleus speckle</location>
    </subcellularLocation>
    <text evidence="1">Phosphorylation by SRPK2 provokes its redistribution from the nuclear speckle to nucleoplasm.</text>
</comment>
<comment type="PTM">
    <text evidence="1">Extensively phosphorylated on serine residues in the RS domain. Phosphorylated by SRPK2 and this causes its redistribution from the nuclear speckle to nucleoplasm and controls cell fate decision in response to cisplatin treatment. KAT5/TIP60 inhibits its phosphorylation by preventing SRPK2 nuclear translocation (By similarity).</text>
</comment>
<comment type="PTM">
    <text evidence="1">Acetylation on Lys-52 by KAT5/TIP60 promotes its proteasomal degradation. This effect is counterbalanced by HDAC6, which positively controls SRSF2 protein level by deacetylating it and preventing its proteasomal degradation (By similarity).</text>
</comment>
<comment type="similarity">
    <text evidence="5">Belongs to the splicing factor SR family.</text>
</comment>